<keyword id="KW-0028">Amino-acid biosynthesis</keyword>
<keyword id="KW-0055">Arginine biosynthesis</keyword>
<keyword id="KW-0067">ATP-binding</keyword>
<keyword id="KW-0315">Glutamine amidotransferase</keyword>
<keyword id="KW-0436">Ligase</keyword>
<keyword id="KW-0547">Nucleotide-binding</keyword>
<keyword id="KW-0665">Pyrimidine biosynthesis</keyword>
<gene>
    <name evidence="1" type="primary">carA</name>
    <name type="ordered locus">BMEA_A1536</name>
</gene>
<organism>
    <name type="scientific">Brucella melitensis biotype 2 (strain ATCC 23457)</name>
    <dbReference type="NCBI Taxonomy" id="546272"/>
    <lineage>
        <taxon>Bacteria</taxon>
        <taxon>Pseudomonadati</taxon>
        <taxon>Pseudomonadota</taxon>
        <taxon>Alphaproteobacteria</taxon>
        <taxon>Hyphomicrobiales</taxon>
        <taxon>Brucellaceae</taxon>
        <taxon>Brucella/Ochrobactrum group</taxon>
        <taxon>Brucella</taxon>
    </lineage>
</organism>
<comment type="function">
    <text evidence="1">Small subunit of the glutamine-dependent carbamoyl phosphate synthetase (CPSase). CPSase catalyzes the formation of carbamoyl phosphate from the ammonia moiety of glutamine, carbonate, and phosphate donated by ATP, constituting the first step of 2 biosynthetic pathways, one leading to arginine and/or urea and the other to pyrimidine nucleotides. The small subunit (glutamine amidotransferase) binds and cleaves glutamine to supply the large subunit with the substrate ammonia.</text>
</comment>
<comment type="catalytic activity">
    <reaction evidence="1">
        <text>hydrogencarbonate + L-glutamine + 2 ATP + H2O = carbamoyl phosphate + L-glutamate + 2 ADP + phosphate + 2 H(+)</text>
        <dbReference type="Rhea" id="RHEA:18633"/>
        <dbReference type="ChEBI" id="CHEBI:15377"/>
        <dbReference type="ChEBI" id="CHEBI:15378"/>
        <dbReference type="ChEBI" id="CHEBI:17544"/>
        <dbReference type="ChEBI" id="CHEBI:29985"/>
        <dbReference type="ChEBI" id="CHEBI:30616"/>
        <dbReference type="ChEBI" id="CHEBI:43474"/>
        <dbReference type="ChEBI" id="CHEBI:58228"/>
        <dbReference type="ChEBI" id="CHEBI:58359"/>
        <dbReference type="ChEBI" id="CHEBI:456216"/>
        <dbReference type="EC" id="6.3.5.5"/>
    </reaction>
</comment>
<comment type="catalytic activity">
    <molecule>Carbamoyl phosphate synthase small chain</molecule>
    <reaction evidence="1">
        <text>L-glutamine + H2O = L-glutamate + NH4(+)</text>
        <dbReference type="Rhea" id="RHEA:15889"/>
        <dbReference type="ChEBI" id="CHEBI:15377"/>
        <dbReference type="ChEBI" id="CHEBI:28938"/>
        <dbReference type="ChEBI" id="CHEBI:29985"/>
        <dbReference type="ChEBI" id="CHEBI:58359"/>
    </reaction>
</comment>
<comment type="pathway">
    <text evidence="1">Amino-acid biosynthesis; L-arginine biosynthesis; carbamoyl phosphate from bicarbonate: step 1/1.</text>
</comment>
<comment type="pathway">
    <text evidence="1">Pyrimidine metabolism; UMP biosynthesis via de novo pathway; (S)-dihydroorotate from bicarbonate: step 1/3.</text>
</comment>
<comment type="subunit">
    <text evidence="1">Composed of two chains; the small (or glutamine) chain promotes the hydrolysis of glutamine to ammonia, which is used by the large (or ammonia) chain to synthesize carbamoyl phosphate. Tetramer of heterodimers (alpha,beta)4.</text>
</comment>
<comment type="similarity">
    <text evidence="1">Belongs to the CarA family.</text>
</comment>
<dbReference type="EC" id="6.3.5.5" evidence="1"/>
<dbReference type="EMBL" id="CP001488">
    <property type="protein sequence ID" value="ACO01244.1"/>
    <property type="molecule type" value="Genomic_DNA"/>
</dbReference>
<dbReference type="RefSeq" id="WP_002964590.1">
    <property type="nucleotide sequence ID" value="NC_012441.1"/>
</dbReference>
<dbReference type="SMR" id="C0REC2"/>
<dbReference type="GeneID" id="93016227"/>
<dbReference type="KEGG" id="bmi:BMEA_A1536"/>
<dbReference type="HOGENOM" id="CLU_035901_2_2_5"/>
<dbReference type="UniPathway" id="UPA00068">
    <property type="reaction ID" value="UER00171"/>
</dbReference>
<dbReference type="UniPathway" id="UPA00070">
    <property type="reaction ID" value="UER00115"/>
</dbReference>
<dbReference type="Proteomes" id="UP000001748">
    <property type="component" value="Chromosome I"/>
</dbReference>
<dbReference type="GO" id="GO:0005524">
    <property type="term" value="F:ATP binding"/>
    <property type="evidence" value="ECO:0007669"/>
    <property type="project" value="UniProtKB-UniRule"/>
</dbReference>
<dbReference type="GO" id="GO:0004088">
    <property type="term" value="F:carbamoyl-phosphate synthase (glutamine-hydrolyzing) activity"/>
    <property type="evidence" value="ECO:0007669"/>
    <property type="project" value="UniProtKB-UniRule"/>
</dbReference>
<dbReference type="GO" id="GO:0004359">
    <property type="term" value="F:glutaminase activity"/>
    <property type="evidence" value="ECO:0007669"/>
    <property type="project" value="RHEA"/>
</dbReference>
<dbReference type="GO" id="GO:0006207">
    <property type="term" value="P:'de novo' pyrimidine nucleobase biosynthetic process"/>
    <property type="evidence" value="ECO:0007669"/>
    <property type="project" value="InterPro"/>
</dbReference>
<dbReference type="GO" id="GO:0044205">
    <property type="term" value="P:'de novo' UMP biosynthetic process"/>
    <property type="evidence" value="ECO:0007669"/>
    <property type="project" value="UniProtKB-UniRule"/>
</dbReference>
<dbReference type="GO" id="GO:0006541">
    <property type="term" value="P:glutamine metabolic process"/>
    <property type="evidence" value="ECO:0007669"/>
    <property type="project" value="InterPro"/>
</dbReference>
<dbReference type="GO" id="GO:0006526">
    <property type="term" value="P:L-arginine biosynthetic process"/>
    <property type="evidence" value="ECO:0007669"/>
    <property type="project" value="UniProtKB-UniRule"/>
</dbReference>
<dbReference type="CDD" id="cd01744">
    <property type="entry name" value="GATase1_CPSase"/>
    <property type="match status" value="1"/>
</dbReference>
<dbReference type="FunFam" id="3.50.30.20:FF:000001">
    <property type="entry name" value="Carbamoyl-phosphate synthase small chain"/>
    <property type="match status" value="1"/>
</dbReference>
<dbReference type="Gene3D" id="3.40.50.880">
    <property type="match status" value="1"/>
</dbReference>
<dbReference type="Gene3D" id="3.50.30.20">
    <property type="entry name" value="Carbamoyl-phosphate synthase small subunit, N-terminal domain"/>
    <property type="match status" value="1"/>
</dbReference>
<dbReference type="HAMAP" id="MF_01209">
    <property type="entry name" value="CPSase_S_chain"/>
    <property type="match status" value="1"/>
</dbReference>
<dbReference type="InterPro" id="IPR050472">
    <property type="entry name" value="Anth_synth/Amidotransfase"/>
</dbReference>
<dbReference type="InterPro" id="IPR006274">
    <property type="entry name" value="CarbamoylP_synth_ssu"/>
</dbReference>
<dbReference type="InterPro" id="IPR002474">
    <property type="entry name" value="CarbamoylP_synth_ssu_N"/>
</dbReference>
<dbReference type="InterPro" id="IPR036480">
    <property type="entry name" value="CarbP_synth_ssu_N_sf"/>
</dbReference>
<dbReference type="InterPro" id="IPR029062">
    <property type="entry name" value="Class_I_gatase-like"/>
</dbReference>
<dbReference type="InterPro" id="IPR035686">
    <property type="entry name" value="CPSase_GATase1"/>
</dbReference>
<dbReference type="InterPro" id="IPR017926">
    <property type="entry name" value="GATASE"/>
</dbReference>
<dbReference type="NCBIfam" id="TIGR01368">
    <property type="entry name" value="CPSaseIIsmall"/>
    <property type="match status" value="1"/>
</dbReference>
<dbReference type="NCBIfam" id="NF009475">
    <property type="entry name" value="PRK12838.1"/>
    <property type="match status" value="1"/>
</dbReference>
<dbReference type="PANTHER" id="PTHR43418:SF7">
    <property type="entry name" value="CARBAMOYL-PHOSPHATE SYNTHASE SMALL CHAIN"/>
    <property type="match status" value="1"/>
</dbReference>
<dbReference type="PANTHER" id="PTHR43418">
    <property type="entry name" value="MULTIFUNCTIONAL TRYPTOPHAN BIOSYNTHESIS PROTEIN-RELATED"/>
    <property type="match status" value="1"/>
</dbReference>
<dbReference type="Pfam" id="PF00988">
    <property type="entry name" value="CPSase_sm_chain"/>
    <property type="match status" value="1"/>
</dbReference>
<dbReference type="Pfam" id="PF00117">
    <property type="entry name" value="GATase"/>
    <property type="match status" value="1"/>
</dbReference>
<dbReference type="PRINTS" id="PR00097">
    <property type="entry name" value="ANTSNTHASEII"/>
</dbReference>
<dbReference type="PRINTS" id="PR00099">
    <property type="entry name" value="CPSGATASE"/>
</dbReference>
<dbReference type="PRINTS" id="PR00096">
    <property type="entry name" value="GATASE"/>
</dbReference>
<dbReference type="SMART" id="SM01097">
    <property type="entry name" value="CPSase_sm_chain"/>
    <property type="match status" value="1"/>
</dbReference>
<dbReference type="SUPFAM" id="SSF52021">
    <property type="entry name" value="Carbamoyl phosphate synthetase, small subunit N-terminal domain"/>
    <property type="match status" value="1"/>
</dbReference>
<dbReference type="SUPFAM" id="SSF52317">
    <property type="entry name" value="Class I glutamine amidotransferase-like"/>
    <property type="match status" value="1"/>
</dbReference>
<dbReference type="PROSITE" id="PS51273">
    <property type="entry name" value="GATASE_TYPE_1"/>
    <property type="match status" value="1"/>
</dbReference>
<protein>
    <recommendedName>
        <fullName evidence="1">Carbamoyl phosphate synthase small chain</fullName>
        <ecNumber evidence="1">6.3.5.5</ecNumber>
    </recommendedName>
    <alternativeName>
        <fullName evidence="1">Carbamoyl phosphate synthetase glutamine chain</fullName>
    </alternativeName>
</protein>
<evidence type="ECO:0000255" key="1">
    <source>
        <dbReference type="HAMAP-Rule" id="MF_01209"/>
    </source>
</evidence>
<name>CARA_BRUMB</name>
<reference key="1">
    <citation type="submission" date="2009-03" db="EMBL/GenBank/DDBJ databases">
        <title>Brucella melitensis ATCC 23457 whole genome shotgun sequencing project.</title>
        <authorList>
            <person name="Setubal J.C."/>
            <person name="Boyle S."/>
            <person name="Crasta O.R."/>
            <person name="Gillespie J.J."/>
            <person name="Kenyon R.W."/>
            <person name="Lu J."/>
            <person name="Mane S."/>
            <person name="Nagrani S."/>
            <person name="Shallom J.M."/>
            <person name="Shallom S."/>
            <person name="Shukla M."/>
            <person name="Snyder E.E."/>
            <person name="Sobral B.W."/>
            <person name="Wattam A.R."/>
            <person name="Will R."/>
            <person name="Williams K."/>
            <person name="Yoo H."/>
            <person name="Munk C."/>
            <person name="Tapia R."/>
            <person name="Han C."/>
            <person name="Detter J.C."/>
            <person name="Bruce D."/>
            <person name="Brettin T.S."/>
        </authorList>
    </citation>
    <scope>NUCLEOTIDE SEQUENCE [LARGE SCALE GENOMIC DNA]</scope>
    <source>
        <strain>ATCC 23457</strain>
    </source>
</reference>
<accession>C0REC2</accession>
<feature type="chain" id="PRO_1000164697" description="Carbamoyl phosphate synthase small chain">
    <location>
        <begin position="1"/>
        <end position="407"/>
    </location>
</feature>
<feature type="domain" description="Glutamine amidotransferase type-1" evidence="1">
    <location>
        <begin position="209"/>
        <end position="397"/>
    </location>
</feature>
<feature type="region of interest" description="CPSase" evidence="1">
    <location>
        <begin position="1"/>
        <end position="205"/>
    </location>
</feature>
<feature type="active site" description="Nucleophile" evidence="1">
    <location>
        <position position="286"/>
    </location>
</feature>
<feature type="active site" evidence="1">
    <location>
        <position position="370"/>
    </location>
</feature>
<feature type="active site" evidence="1">
    <location>
        <position position="372"/>
    </location>
</feature>
<feature type="binding site" evidence="1">
    <location>
        <position position="60"/>
    </location>
    <ligand>
        <name>L-glutamine</name>
        <dbReference type="ChEBI" id="CHEBI:58359"/>
    </ligand>
</feature>
<feature type="binding site" evidence="1">
    <location>
        <position position="257"/>
    </location>
    <ligand>
        <name>L-glutamine</name>
        <dbReference type="ChEBI" id="CHEBI:58359"/>
    </ligand>
</feature>
<feature type="binding site" evidence="1">
    <location>
        <position position="259"/>
    </location>
    <ligand>
        <name>L-glutamine</name>
        <dbReference type="ChEBI" id="CHEBI:58359"/>
    </ligand>
</feature>
<feature type="binding site" evidence="1">
    <location>
        <position position="287"/>
    </location>
    <ligand>
        <name>L-glutamine</name>
        <dbReference type="ChEBI" id="CHEBI:58359"/>
    </ligand>
</feature>
<feature type="binding site" evidence="1">
    <location>
        <position position="290"/>
    </location>
    <ligand>
        <name>L-glutamine</name>
        <dbReference type="ChEBI" id="CHEBI:58359"/>
    </ligand>
</feature>
<feature type="binding site" evidence="1">
    <location>
        <position position="328"/>
    </location>
    <ligand>
        <name>L-glutamine</name>
        <dbReference type="ChEBI" id="CHEBI:58359"/>
    </ligand>
</feature>
<feature type="binding site" evidence="1">
    <location>
        <position position="330"/>
    </location>
    <ligand>
        <name>L-glutamine</name>
        <dbReference type="ChEBI" id="CHEBI:58359"/>
    </ligand>
</feature>
<feature type="binding site" evidence="1">
    <location>
        <position position="331"/>
    </location>
    <ligand>
        <name>L-glutamine</name>
        <dbReference type="ChEBI" id="CHEBI:58359"/>
    </ligand>
</feature>
<proteinExistence type="inferred from homology"/>
<sequence length="407" mass="43536">MTETTPKTAPWTVQKRTAVLVLADGTVIEGKGLGATGAVEAEVVFNTALTGYEEILTDPSYAGQIVTFTFPHIGNVGANAEDIEDLTPANRHGAVGAIFKADITAPSNFRAAKDLDSWLKHRGIIALAGIDTRALTALIRERGAQNAVIAHDPNGNFDLDALKARAANWCGLENLDLAKDVTIGQSLVWKELPWTLQDGYGEQDAPQYHVVALDFGVKRNILRLLTGLGAKVTVLPATATAEDVLAHNPDGVFLSNGPGDPAATGEYAVPTIGKLVETGIPLFGICLGHQMLALALGGRTEKMHQGHHGANHPVKDYTTGKVEIVSMNHGFAVDSDSLPENVEETHVSLFDGTNCGLRVVGKPVFSVQHHPEASPGPQDSHYLFRRFINLIRERKGQAPLPEREQAA</sequence>